<name>RECR_BORPE</name>
<evidence type="ECO:0000255" key="1">
    <source>
        <dbReference type="HAMAP-Rule" id="MF_00017"/>
    </source>
</evidence>
<organism>
    <name type="scientific">Bordetella pertussis (strain Tohama I / ATCC BAA-589 / NCTC 13251)</name>
    <dbReference type="NCBI Taxonomy" id="257313"/>
    <lineage>
        <taxon>Bacteria</taxon>
        <taxon>Pseudomonadati</taxon>
        <taxon>Pseudomonadota</taxon>
        <taxon>Betaproteobacteria</taxon>
        <taxon>Burkholderiales</taxon>
        <taxon>Alcaligenaceae</taxon>
        <taxon>Bordetella</taxon>
    </lineage>
</organism>
<protein>
    <recommendedName>
        <fullName evidence="1">Recombination protein RecR</fullName>
    </recommendedName>
</protein>
<sequence>MDPQLPEPEPLIALIEALRRLPGVGVRSARRMAYHLLQHDLQGADMLGRALSAAVQHLRHCARCNSFTEDEVCATCANPKRDPGLLCIVETPADQNMIESSHGYRGLYYVLMGRIAPLEGVGPRELDFQRVIERACDGVVQEVILATNFTAEGETTAHFLDDALSERGLKVTRLARGVPAGSELEYVDAGTIAWALMERRST</sequence>
<accession>Q7VY12</accession>
<dbReference type="EMBL" id="BX640415">
    <property type="protein sequence ID" value="CAE41841.1"/>
    <property type="molecule type" value="Genomic_DNA"/>
</dbReference>
<dbReference type="RefSeq" id="NP_880287.1">
    <property type="nucleotide sequence ID" value="NC_002929.2"/>
</dbReference>
<dbReference type="RefSeq" id="WP_010930424.1">
    <property type="nucleotide sequence ID" value="NZ_CP039022.1"/>
</dbReference>
<dbReference type="SMR" id="Q7VY12"/>
<dbReference type="STRING" id="257313.BP1551"/>
<dbReference type="PaxDb" id="257313-BP1551"/>
<dbReference type="GeneID" id="69601471"/>
<dbReference type="KEGG" id="bpe:BP1551"/>
<dbReference type="PATRIC" id="fig|257313.5.peg.1664"/>
<dbReference type="eggNOG" id="COG0353">
    <property type="taxonomic scope" value="Bacteria"/>
</dbReference>
<dbReference type="HOGENOM" id="CLU_060739_1_2_4"/>
<dbReference type="Proteomes" id="UP000002676">
    <property type="component" value="Chromosome"/>
</dbReference>
<dbReference type="GO" id="GO:0003677">
    <property type="term" value="F:DNA binding"/>
    <property type="evidence" value="ECO:0007669"/>
    <property type="project" value="UniProtKB-UniRule"/>
</dbReference>
<dbReference type="GO" id="GO:0008270">
    <property type="term" value="F:zinc ion binding"/>
    <property type="evidence" value="ECO:0007669"/>
    <property type="project" value="UniProtKB-KW"/>
</dbReference>
<dbReference type="GO" id="GO:0006310">
    <property type="term" value="P:DNA recombination"/>
    <property type="evidence" value="ECO:0007669"/>
    <property type="project" value="UniProtKB-UniRule"/>
</dbReference>
<dbReference type="GO" id="GO:0006281">
    <property type="term" value="P:DNA repair"/>
    <property type="evidence" value="ECO:0007669"/>
    <property type="project" value="UniProtKB-UniRule"/>
</dbReference>
<dbReference type="CDD" id="cd01025">
    <property type="entry name" value="TOPRIM_recR"/>
    <property type="match status" value="1"/>
</dbReference>
<dbReference type="Gene3D" id="3.40.1360.10">
    <property type="match status" value="1"/>
</dbReference>
<dbReference type="Gene3D" id="1.10.8.420">
    <property type="entry name" value="RecR Domain 1"/>
    <property type="match status" value="1"/>
</dbReference>
<dbReference type="HAMAP" id="MF_00017">
    <property type="entry name" value="RecR"/>
    <property type="match status" value="1"/>
</dbReference>
<dbReference type="InterPro" id="IPR000093">
    <property type="entry name" value="DNA_Rcmb_RecR"/>
</dbReference>
<dbReference type="InterPro" id="IPR023627">
    <property type="entry name" value="Rcmb_RecR"/>
</dbReference>
<dbReference type="InterPro" id="IPR015967">
    <property type="entry name" value="Rcmb_RecR_Znf"/>
</dbReference>
<dbReference type="InterPro" id="IPR006171">
    <property type="entry name" value="TOPRIM_dom"/>
</dbReference>
<dbReference type="InterPro" id="IPR034137">
    <property type="entry name" value="TOPRIM_RecR"/>
</dbReference>
<dbReference type="NCBIfam" id="TIGR00615">
    <property type="entry name" value="recR"/>
    <property type="match status" value="1"/>
</dbReference>
<dbReference type="PANTHER" id="PTHR30446">
    <property type="entry name" value="RECOMBINATION PROTEIN RECR"/>
    <property type="match status" value="1"/>
</dbReference>
<dbReference type="PANTHER" id="PTHR30446:SF0">
    <property type="entry name" value="RECOMBINATION PROTEIN RECR"/>
    <property type="match status" value="1"/>
</dbReference>
<dbReference type="Pfam" id="PF21175">
    <property type="entry name" value="RecR_C"/>
    <property type="match status" value="1"/>
</dbReference>
<dbReference type="Pfam" id="PF21176">
    <property type="entry name" value="RecR_HhH"/>
    <property type="match status" value="1"/>
</dbReference>
<dbReference type="Pfam" id="PF02132">
    <property type="entry name" value="RecR_ZnF"/>
    <property type="match status" value="1"/>
</dbReference>
<dbReference type="Pfam" id="PF13662">
    <property type="entry name" value="Toprim_4"/>
    <property type="match status" value="1"/>
</dbReference>
<dbReference type="SMART" id="SM00493">
    <property type="entry name" value="TOPRIM"/>
    <property type="match status" value="1"/>
</dbReference>
<dbReference type="SUPFAM" id="SSF111304">
    <property type="entry name" value="Recombination protein RecR"/>
    <property type="match status" value="1"/>
</dbReference>
<dbReference type="PROSITE" id="PS50880">
    <property type="entry name" value="TOPRIM"/>
    <property type="match status" value="1"/>
</dbReference>
<gene>
    <name evidence="1" type="primary">recR</name>
    <name type="ordered locus">BP1551</name>
</gene>
<comment type="function">
    <text evidence="1">May play a role in DNA repair. It seems to be involved in an RecBC-independent recombinational process of DNA repair. It may act with RecF and RecO.</text>
</comment>
<comment type="similarity">
    <text evidence="1">Belongs to the RecR family.</text>
</comment>
<keyword id="KW-0227">DNA damage</keyword>
<keyword id="KW-0233">DNA recombination</keyword>
<keyword id="KW-0234">DNA repair</keyword>
<keyword id="KW-0479">Metal-binding</keyword>
<keyword id="KW-1185">Reference proteome</keyword>
<keyword id="KW-0862">Zinc</keyword>
<keyword id="KW-0863">Zinc-finger</keyword>
<feature type="chain" id="PRO_0000190291" description="Recombination protein RecR">
    <location>
        <begin position="1"/>
        <end position="202"/>
    </location>
</feature>
<feature type="domain" description="Toprim" evidence="1">
    <location>
        <begin position="84"/>
        <end position="179"/>
    </location>
</feature>
<feature type="zinc finger region" description="C4-type" evidence="1">
    <location>
        <begin position="61"/>
        <end position="76"/>
    </location>
</feature>
<proteinExistence type="inferred from homology"/>
<reference key="1">
    <citation type="journal article" date="2003" name="Nat. Genet.">
        <title>Comparative analysis of the genome sequences of Bordetella pertussis, Bordetella parapertussis and Bordetella bronchiseptica.</title>
        <authorList>
            <person name="Parkhill J."/>
            <person name="Sebaihia M."/>
            <person name="Preston A."/>
            <person name="Murphy L.D."/>
            <person name="Thomson N.R."/>
            <person name="Harris D.E."/>
            <person name="Holden M.T.G."/>
            <person name="Churcher C.M."/>
            <person name="Bentley S.D."/>
            <person name="Mungall K.L."/>
            <person name="Cerdeno-Tarraga A.-M."/>
            <person name="Temple L."/>
            <person name="James K.D."/>
            <person name="Harris B."/>
            <person name="Quail M.A."/>
            <person name="Achtman M."/>
            <person name="Atkin R."/>
            <person name="Baker S."/>
            <person name="Basham D."/>
            <person name="Bason N."/>
            <person name="Cherevach I."/>
            <person name="Chillingworth T."/>
            <person name="Collins M."/>
            <person name="Cronin A."/>
            <person name="Davis P."/>
            <person name="Doggett J."/>
            <person name="Feltwell T."/>
            <person name="Goble A."/>
            <person name="Hamlin N."/>
            <person name="Hauser H."/>
            <person name="Holroyd S."/>
            <person name="Jagels K."/>
            <person name="Leather S."/>
            <person name="Moule S."/>
            <person name="Norberczak H."/>
            <person name="O'Neil S."/>
            <person name="Ormond D."/>
            <person name="Price C."/>
            <person name="Rabbinowitsch E."/>
            <person name="Rutter S."/>
            <person name="Sanders M."/>
            <person name="Saunders D."/>
            <person name="Seeger K."/>
            <person name="Sharp S."/>
            <person name="Simmonds M."/>
            <person name="Skelton J."/>
            <person name="Squares R."/>
            <person name="Squares S."/>
            <person name="Stevens K."/>
            <person name="Unwin L."/>
            <person name="Whitehead S."/>
            <person name="Barrell B.G."/>
            <person name="Maskell D.J."/>
        </authorList>
    </citation>
    <scope>NUCLEOTIDE SEQUENCE [LARGE SCALE GENOMIC DNA]</scope>
    <source>
        <strain>Tohama I / ATCC BAA-589 / NCTC 13251</strain>
    </source>
</reference>